<name>PSD4_HUMAN</name>
<evidence type="ECO:0000250" key="1">
    <source>
        <dbReference type="UniProtKB" id="Q8BLR5"/>
    </source>
</evidence>
<evidence type="ECO:0000255" key="2"/>
<evidence type="ECO:0000255" key="3">
    <source>
        <dbReference type="PROSITE-ProRule" id="PRU00145"/>
    </source>
</evidence>
<evidence type="ECO:0000255" key="4">
    <source>
        <dbReference type="PROSITE-ProRule" id="PRU00189"/>
    </source>
</evidence>
<evidence type="ECO:0000256" key="5">
    <source>
        <dbReference type="SAM" id="MobiDB-lite"/>
    </source>
</evidence>
<evidence type="ECO:0000269" key="6">
    <source>
    </source>
</evidence>
<evidence type="ECO:0000269" key="7">
    <source>
    </source>
</evidence>
<evidence type="ECO:0000269" key="8">
    <source>
    </source>
</evidence>
<evidence type="ECO:0000269" key="9">
    <source>
    </source>
</evidence>
<evidence type="ECO:0000269" key="10">
    <source>
    </source>
</evidence>
<evidence type="ECO:0000269" key="11">
    <source ref="3"/>
</evidence>
<evidence type="ECO:0000269" key="12">
    <source ref="6"/>
</evidence>
<evidence type="ECO:0000303" key="13">
    <source>
    </source>
</evidence>
<evidence type="ECO:0000303" key="14">
    <source>
    </source>
</evidence>
<evidence type="ECO:0000303" key="15">
    <source>
    </source>
</evidence>
<evidence type="ECO:0000305" key="16"/>
<evidence type="ECO:0000305" key="17">
    <source>
    </source>
</evidence>
<evidence type="ECO:0007744" key="18">
    <source>
    </source>
</evidence>
<evidence type="ECO:0007744" key="19">
    <source>
    </source>
</evidence>
<evidence type="ECO:0007744" key="20">
    <source>
    </source>
</evidence>
<feature type="chain" id="PRO_0000251731" description="PH and SEC7 domain-containing protein 4">
    <location>
        <begin position="1"/>
        <end position="1056"/>
    </location>
</feature>
<feature type="domain" description="SEC7" evidence="4">
    <location>
        <begin position="544"/>
        <end position="736"/>
    </location>
</feature>
<feature type="domain" description="PH" evidence="3">
    <location>
        <begin position="776"/>
        <end position="892"/>
    </location>
</feature>
<feature type="region of interest" description="Disordered" evidence="5">
    <location>
        <begin position="25"/>
        <end position="71"/>
    </location>
</feature>
<feature type="region of interest" description="Disordered" evidence="5">
    <location>
        <begin position="87"/>
        <end position="149"/>
    </location>
</feature>
<feature type="region of interest" description="Disordered" evidence="5">
    <location>
        <begin position="195"/>
        <end position="239"/>
    </location>
</feature>
<feature type="region of interest" description="Disordered" evidence="5">
    <location>
        <begin position="340"/>
        <end position="362"/>
    </location>
</feature>
<feature type="region of interest" description="Disordered" evidence="5">
    <location>
        <begin position="388"/>
        <end position="533"/>
    </location>
</feature>
<feature type="region of interest" description="Disordered" evidence="5">
    <location>
        <begin position="546"/>
        <end position="581"/>
    </location>
</feature>
<feature type="region of interest" description="Disordered" evidence="5">
    <location>
        <begin position="1004"/>
        <end position="1056"/>
    </location>
</feature>
<feature type="coiled-coil region" evidence="2">
    <location>
        <begin position="921"/>
        <end position="976"/>
    </location>
</feature>
<feature type="compositionally biased region" description="Basic and acidic residues" evidence="5">
    <location>
        <begin position="25"/>
        <end position="42"/>
    </location>
</feature>
<feature type="compositionally biased region" description="Polar residues" evidence="5">
    <location>
        <begin position="88"/>
        <end position="99"/>
    </location>
</feature>
<feature type="compositionally biased region" description="Polar residues" evidence="5">
    <location>
        <begin position="128"/>
        <end position="137"/>
    </location>
</feature>
<feature type="compositionally biased region" description="Acidic residues" evidence="5">
    <location>
        <begin position="207"/>
        <end position="220"/>
    </location>
</feature>
<feature type="compositionally biased region" description="Basic and acidic residues" evidence="5">
    <location>
        <begin position="414"/>
        <end position="423"/>
    </location>
</feature>
<feature type="compositionally biased region" description="Low complexity" evidence="5">
    <location>
        <begin position="438"/>
        <end position="456"/>
    </location>
</feature>
<feature type="compositionally biased region" description="Polar residues" evidence="5">
    <location>
        <begin position="466"/>
        <end position="476"/>
    </location>
</feature>
<feature type="compositionally biased region" description="Polar residues" evidence="5">
    <location>
        <begin position="486"/>
        <end position="502"/>
    </location>
</feature>
<feature type="compositionally biased region" description="Basic and acidic residues" evidence="5">
    <location>
        <begin position="504"/>
        <end position="522"/>
    </location>
</feature>
<feature type="compositionally biased region" description="Polar residues" evidence="5">
    <location>
        <begin position="548"/>
        <end position="567"/>
    </location>
</feature>
<feature type="compositionally biased region" description="Basic residues" evidence="5">
    <location>
        <begin position="1043"/>
        <end position="1056"/>
    </location>
</feature>
<feature type="modified residue" description="Phosphoserine" evidence="19">
    <location>
        <position position="131"/>
    </location>
</feature>
<feature type="modified residue" description="Phosphoserine" evidence="19">
    <location>
        <position position="134"/>
    </location>
</feature>
<feature type="modified residue" description="Phosphoserine" evidence="19">
    <location>
        <position position="143"/>
    </location>
</feature>
<feature type="modified residue" description="Phosphoserine" evidence="19">
    <location>
        <position position="413"/>
    </location>
</feature>
<feature type="modified residue" description="Phosphoserine" evidence="20">
    <location>
        <position position="448"/>
    </location>
</feature>
<feature type="modified residue" description="Phosphoserine" evidence="1">
    <location>
        <position position="469"/>
    </location>
</feature>
<feature type="modified residue" description="Phosphoserine" evidence="18">
    <location>
        <position position="491"/>
    </location>
</feature>
<feature type="modified residue" description="Phosphoserine" evidence="19">
    <location>
        <position position="1019"/>
    </location>
</feature>
<feature type="modified residue" description="Phosphoserine" evidence="1">
    <location>
        <position position="1022"/>
    </location>
</feature>
<feature type="splice variant" id="VSP_020772" description="In isoform 2." evidence="14">
    <location>
        <begin position="417"/>
        <end position="444"/>
    </location>
</feature>
<feature type="splice variant" id="VSP_020773" description="In isoform 2." evidence="14">
    <location>
        <position position="820"/>
    </location>
</feature>
<feature type="sequence variant" id="VAR_051921" description="In dbSNP:rs1562277.">
    <original>G</original>
    <variation>R</variation>
    <location>
        <position position="83"/>
    </location>
</feature>
<feature type="sequence variant" id="VAR_051922" description="In dbSNP:rs12472091.">
    <original>S</original>
    <variation>P</variation>
    <location>
        <position position="233"/>
    </location>
</feature>
<feature type="sequence variant" id="VAR_027712" description="In dbSNP:rs4849167." evidence="7 8 11 12">
    <original>G</original>
    <variation>A</variation>
    <location>
        <position position="269"/>
    </location>
</feature>
<feature type="sequence variant" id="VAR_051923" description="In dbSNP:rs45487591.">
    <original>R</original>
    <variation>Q</variation>
    <location>
        <position position="637"/>
    </location>
</feature>
<feature type="sequence variant" id="VAR_051924" description="In dbSNP:rs45574835.">
    <original>I</original>
    <variation>V</variation>
    <location>
        <position position="658"/>
    </location>
</feature>
<feature type="sequence conflict" description="In Ref. 1; CAD30842 and 2; AAD00107." evidence="16" ref="1 2">
    <original>L</original>
    <variation>F</variation>
    <location>
        <position position="7"/>
    </location>
</feature>
<feature type="sequence conflict" description="In Ref. 2; AAD00107." evidence="16" ref="2">
    <original>P</original>
    <variation>L</variation>
    <location>
        <position position="8"/>
    </location>
</feature>
<feature type="sequence conflict" description="In Ref. 7; AAH35307." evidence="16" ref="7">
    <original>E</original>
    <variation>D</variation>
    <location>
        <position position="124"/>
    </location>
</feature>
<feature type="sequence conflict" description="In Ref. 2; AAD00107." evidence="16" ref="2">
    <original>T</original>
    <variation>I</variation>
    <location>
        <position position="410"/>
    </location>
</feature>
<feature type="sequence conflict" description="In Ref. 2; AAD00107." evidence="16" ref="2">
    <original>L</original>
    <variation>F</variation>
    <location>
        <position position="428"/>
    </location>
</feature>
<organism>
    <name type="scientific">Homo sapiens</name>
    <name type="common">Human</name>
    <dbReference type="NCBI Taxonomy" id="9606"/>
    <lineage>
        <taxon>Eukaryota</taxon>
        <taxon>Metazoa</taxon>
        <taxon>Chordata</taxon>
        <taxon>Craniata</taxon>
        <taxon>Vertebrata</taxon>
        <taxon>Euteleostomi</taxon>
        <taxon>Mammalia</taxon>
        <taxon>Eutheria</taxon>
        <taxon>Euarchontoglires</taxon>
        <taxon>Primates</taxon>
        <taxon>Haplorrhini</taxon>
        <taxon>Catarrhini</taxon>
        <taxon>Hominidae</taxon>
        <taxon>Homo</taxon>
    </lineage>
</organism>
<proteinExistence type="evidence at protein level"/>
<accession>Q8NDX1</accession>
<accession>A6NEG7</accession>
<accession>A8K1Y0</accession>
<accession>O95621</accession>
<accession>Q4ZG34</accession>
<accession>Q6GPH8</accession>
<accession>Q8IYP4</accession>
<protein>
    <recommendedName>
        <fullName>PH and SEC7 domain-containing protein 4</fullName>
    </recommendedName>
    <alternativeName>
        <fullName>Exchange factor for ADP-ribosylation factor guanine nucleotide factor 6 B</fullName>
        <shortName>Exchange factor for ARF6 B</shortName>
    </alternativeName>
    <alternativeName>
        <fullName>Pleckstrin homology and SEC7 domain-containing protein 4</fullName>
    </alternativeName>
    <alternativeName>
        <fullName>Telomeric of interleukin-1 cluster protein</fullName>
    </alternativeName>
</protein>
<comment type="function">
    <text evidence="6 9">Guanine nucleotide exchange factor for ARF6 and ARL14/ARF7. Through ARL14 activation, controls the movement of MHC class II-containing vesicles along the actin cytoskeleton in dendritic cells. Involved in membrane recycling. Interacts with several phosphatidylinositol phosphate species, including phosphatidylinositol 3,4-bisphosphate, phosphatidylinositol 3,5-bisphosphate and phosphatidylinositol 4,5-bisphosphate.</text>
</comment>
<comment type="interaction">
    <interactant intactId="EBI-12215623">
        <id>Q8NDX1-2</id>
    </interactant>
    <interactant intactId="EBI-747813">
        <id>Q5SW96</id>
        <label>LDLRAP1</label>
    </interactant>
    <organismsDiffer>false</organismsDiffer>
    <experiments>6</experiments>
</comment>
<comment type="subcellular location">
    <subcellularLocation>
        <location evidence="6 10">Cell membrane</location>
    </subcellularLocation>
    <subcellularLocation>
        <location evidence="6 10">Cell projection</location>
        <location evidence="6 10">Ruffle membrane</location>
    </subcellularLocation>
    <text evidence="6 10 17">In interphase associated with the plasma membrane, in particular with membrane ruffling regions (PubMed:23603394). Accumulates in dynamic actin-rich membrane ruffles and microvilli-like structures (PubMed:12082148). Recruited to membranes via phosphatidylinositol phosphate-binding (Probable).</text>
</comment>
<comment type="alternative products">
    <event type="alternative splicing"/>
    <isoform>
        <id>Q8NDX1-1</id>
        <name>1</name>
        <sequence type="displayed"/>
    </isoform>
    <isoform>
        <id>Q8NDX1-2</id>
        <name>2</name>
        <sequence type="described" ref="VSP_020772 VSP_020773"/>
    </isoform>
</comment>
<comment type="tissue specificity">
    <text evidence="6">Widely expressed. Highest levels of expression are found in placenta, pancreas, spleen, thymus and peripheral blood.</text>
</comment>
<dbReference type="EMBL" id="AJ459781">
    <property type="protein sequence ID" value="CAD30842.1"/>
    <property type="molecule type" value="mRNA"/>
</dbReference>
<dbReference type="EMBL" id="U63127">
    <property type="protein sequence ID" value="AAD00107.1"/>
    <property type="molecule type" value="mRNA"/>
</dbReference>
<dbReference type="EMBL" id="DQ452296">
    <property type="protein sequence ID" value="ABD96831.1"/>
    <property type="molecule type" value="Genomic_DNA"/>
</dbReference>
<dbReference type="EMBL" id="AK290045">
    <property type="protein sequence ID" value="BAF82734.1"/>
    <property type="molecule type" value="mRNA"/>
</dbReference>
<dbReference type="EMBL" id="AC016683">
    <property type="protein sequence ID" value="AAX88879.1"/>
    <property type="molecule type" value="Genomic_DNA"/>
</dbReference>
<dbReference type="EMBL" id="CH471217">
    <property type="protein sequence ID" value="EAW73626.1"/>
    <property type="molecule type" value="Genomic_DNA"/>
</dbReference>
<dbReference type="EMBL" id="BC035307">
    <property type="protein sequence ID" value="AAH35307.1"/>
    <property type="molecule type" value="mRNA"/>
</dbReference>
<dbReference type="EMBL" id="BC073151">
    <property type="protein sequence ID" value="AAH73151.1"/>
    <property type="molecule type" value="mRNA"/>
</dbReference>
<dbReference type="CCDS" id="CCDS33276.1">
    <molecule id="Q8NDX1-1"/>
</dbReference>
<dbReference type="RefSeq" id="NP_036587.2">
    <molecule id="Q8NDX1-1"/>
    <property type="nucleotide sequence ID" value="NM_012455.3"/>
</dbReference>
<dbReference type="RefSeq" id="XP_005263691.1">
    <property type="nucleotide sequence ID" value="XM_005263634.2"/>
</dbReference>
<dbReference type="SMR" id="Q8NDX1"/>
<dbReference type="BioGRID" id="117094">
    <property type="interactions" value="18"/>
</dbReference>
<dbReference type="FunCoup" id="Q8NDX1">
    <property type="interactions" value="276"/>
</dbReference>
<dbReference type="IntAct" id="Q8NDX1">
    <property type="interactions" value="18"/>
</dbReference>
<dbReference type="STRING" id="9606.ENSP00000245796"/>
<dbReference type="iPTMnet" id="Q8NDX1"/>
<dbReference type="PhosphoSitePlus" id="Q8NDX1"/>
<dbReference type="BioMuta" id="PSD4"/>
<dbReference type="DMDM" id="115515975"/>
<dbReference type="jPOST" id="Q8NDX1"/>
<dbReference type="MassIVE" id="Q8NDX1"/>
<dbReference type="PaxDb" id="9606-ENSP00000245796"/>
<dbReference type="PeptideAtlas" id="Q8NDX1"/>
<dbReference type="ProteomicsDB" id="73075">
    <molecule id="Q8NDX1-1"/>
</dbReference>
<dbReference type="ProteomicsDB" id="73076">
    <molecule id="Q8NDX1-2"/>
</dbReference>
<dbReference type="Pumba" id="Q8NDX1"/>
<dbReference type="Antibodypedia" id="47549">
    <property type="antibodies" value="60 antibodies from 17 providers"/>
</dbReference>
<dbReference type="DNASU" id="23550"/>
<dbReference type="Ensembl" id="ENST00000245796.11">
    <molecule id="Q8NDX1-1"/>
    <property type="protein sequence ID" value="ENSP00000245796.6"/>
    <property type="gene ID" value="ENSG00000125637.16"/>
</dbReference>
<dbReference type="Ensembl" id="ENST00000441564.7">
    <molecule id="Q8NDX1-2"/>
    <property type="protein sequence ID" value="ENSP00000413997.2"/>
    <property type="gene ID" value="ENSG00000125637.16"/>
</dbReference>
<dbReference type="GeneID" id="23550"/>
<dbReference type="KEGG" id="hsa:23550"/>
<dbReference type="MANE-Select" id="ENST00000245796.11">
    <property type="protein sequence ID" value="ENSP00000245796.6"/>
    <property type="RefSeq nucleotide sequence ID" value="NM_012455.3"/>
    <property type="RefSeq protein sequence ID" value="NP_036587.2"/>
</dbReference>
<dbReference type="UCSC" id="uc002tjc.4">
    <molecule id="Q8NDX1-1"/>
    <property type="organism name" value="human"/>
</dbReference>
<dbReference type="AGR" id="HGNC:19096"/>
<dbReference type="CTD" id="23550"/>
<dbReference type="DisGeNET" id="23550"/>
<dbReference type="GeneCards" id="PSD4"/>
<dbReference type="HGNC" id="HGNC:19096">
    <property type="gene designation" value="PSD4"/>
</dbReference>
<dbReference type="HPA" id="ENSG00000125637">
    <property type="expression patterns" value="Tissue enhanced (lymphoid)"/>
</dbReference>
<dbReference type="MIM" id="614442">
    <property type="type" value="gene"/>
</dbReference>
<dbReference type="neXtProt" id="NX_Q8NDX1"/>
<dbReference type="OpenTargets" id="ENSG00000125637"/>
<dbReference type="PharmGKB" id="PA134875981"/>
<dbReference type="VEuPathDB" id="HostDB:ENSG00000125637"/>
<dbReference type="eggNOG" id="KOG0932">
    <property type="taxonomic scope" value="Eukaryota"/>
</dbReference>
<dbReference type="GeneTree" id="ENSGT00940000161976"/>
<dbReference type="HOGENOM" id="CLU_011021_2_0_1"/>
<dbReference type="InParanoid" id="Q8NDX1"/>
<dbReference type="OMA" id="AKEMTSW"/>
<dbReference type="OrthoDB" id="2157641at2759"/>
<dbReference type="PAN-GO" id="Q8NDX1">
    <property type="GO annotations" value="1 GO annotation based on evolutionary models"/>
</dbReference>
<dbReference type="PhylomeDB" id="Q8NDX1"/>
<dbReference type="TreeFam" id="TF319755"/>
<dbReference type="PathwayCommons" id="Q8NDX1"/>
<dbReference type="SignaLink" id="Q8NDX1"/>
<dbReference type="BioGRID-ORCS" id="23550">
    <property type="hits" value="210 hits in 1156 CRISPR screens"/>
</dbReference>
<dbReference type="ChiTaRS" id="PSD4">
    <property type="organism name" value="human"/>
</dbReference>
<dbReference type="GenomeRNAi" id="23550"/>
<dbReference type="Pharos" id="Q8NDX1">
    <property type="development level" value="Tbio"/>
</dbReference>
<dbReference type="PRO" id="PR:Q8NDX1"/>
<dbReference type="Proteomes" id="UP000005640">
    <property type="component" value="Chromosome 2"/>
</dbReference>
<dbReference type="RNAct" id="Q8NDX1">
    <property type="molecule type" value="protein"/>
</dbReference>
<dbReference type="Bgee" id="ENSG00000125637">
    <property type="expression patterns" value="Expressed in granulocyte and 145 other cell types or tissues"/>
</dbReference>
<dbReference type="ExpressionAtlas" id="Q8NDX1">
    <property type="expression patterns" value="baseline and differential"/>
</dbReference>
<dbReference type="GO" id="GO:0016020">
    <property type="term" value="C:membrane"/>
    <property type="evidence" value="ECO:0007005"/>
    <property type="project" value="UniProtKB"/>
</dbReference>
<dbReference type="GO" id="GO:0032587">
    <property type="term" value="C:ruffle membrane"/>
    <property type="evidence" value="ECO:0000314"/>
    <property type="project" value="UniProtKB"/>
</dbReference>
<dbReference type="GO" id="GO:0005085">
    <property type="term" value="F:guanyl-nucleotide exchange factor activity"/>
    <property type="evidence" value="ECO:0007669"/>
    <property type="project" value="UniProtKB-KW"/>
</dbReference>
<dbReference type="GO" id="GO:0005543">
    <property type="term" value="F:phospholipid binding"/>
    <property type="evidence" value="ECO:0007669"/>
    <property type="project" value="InterPro"/>
</dbReference>
<dbReference type="GO" id="GO:0032012">
    <property type="term" value="P:regulation of ARF protein signal transduction"/>
    <property type="evidence" value="ECO:0007669"/>
    <property type="project" value="InterPro"/>
</dbReference>
<dbReference type="CDD" id="cd13295">
    <property type="entry name" value="PH_EFA6"/>
    <property type="match status" value="1"/>
</dbReference>
<dbReference type="CDD" id="cd00171">
    <property type="entry name" value="Sec7"/>
    <property type="match status" value="1"/>
</dbReference>
<dbReference type="FunFam" id="1.10.1000.11:FF:000004">
    <property type="entry name" value="PH and SEC7 domain-containing protein 2"/>
    <property type="match status" value="1"/>
</dbReference>
<dbReference type="FunFam" id="2.30.29.30:FF:000267">
    <property type="entry name" value="PH and SEC7 domain-containing protein 4"/>
    <property type="match status" value="1"/>
</dbReference>
<dbReference type="Gene3D" id="1.10.1000.11">
    <property type="entry name" value="Arf Nucleotide-binding Site Opener,domain 2"/>
    <property type="match status" value="1"/>
</dbReference>
<dbReference type="Gene3D" id="2.30.29.30">
    <property type="entry name" value="Pleckstrin-homology domain (PH domain)/Phosphotyrosine-binding domain (PTB)"/>
    <property type="match status" value="1"/>
</dbReference>
<dbReference type="InterPro" id="IPR011993">
    <property type="entry name" value="PH-like_dom_sf"/>
</dbReference>
<dbReference type="InterPro" id="IPR041681">
    <property type="entry name" value="PH_9"/>
</dbReference>
<dbReference type="InterPro" id="IPR001605">
    <property type="entry name" value="PH_dom-spectrin-type"/>
</dbReference>
<dbReference type="InterPro" id="IPR001849">
    <property type="entry name" value="PH_domain"/>
</dbReference>
<dbReference type="InterPro" id="IPR023394">
    <property type="entry name" value="Sec7_C_sf"/>
</dbReference>
<dbReference type="InterPro" id="IPR000904">
    <property type="entry name" value="Sec7_dom"/>
</dbReference>
<dbReference type="InterPro" id="IPR035999">
    <property type="entry name" value="Sec7_dom_sf"/>
</dbReference>
<dbReference type="PANTHER" id="PTHR10663">
    <property type="entry name" value="GUANYL-NUCLEOTIDE EXCHANGE FACTOR"/>
    <property type="match status" value="1"/>
</dbReference>
<dbReference type="PANTHER" id="PTHR10663:SF338">
    <property type="entry name" value="PH AND SEC7 DOMAIN-CONTAINING PROTEIN 4"/>
    <property type="match status" value="1"/>
</dbReference>
<dbReference type="Pfam" id="PF15410">
    <property type="entry name" value="PH_9"/>
    <property type="match status" value="1"/>
</dbReference>
<dbReference type="Pfam" id="PF01369">
    <property type="entry name" value="Sec7"/>
    <property type="match status" value="1"/>
</dbReference>
<dbReference type="PRINTS" id="PR00683">
    <property type="entry name" value="SPECTRINPH"/>
</dbReference>
<dbReference type="SMART" id="SM00233">
    <property type="entry name" value="PH"/>
    <property type="match status" value="1"/>
</dbReference>
<dbReference type="SMART" id="SM00222">
    <property type="entry name" value="Sec7"/>
    <property type="match status" value="1"/>
</dbReference>
<dbReference type="SUPFAM" id="SSF50729">
    <property type="entry name" value="PH domain-like"/>
    <property type="match status" value="1"/>
</dbReference>
<dbReference type="SUPFAM" id="SSF48425">
    <property type="entry name" value="Sec7 domain"/>
    <property type="match status" value="1"/>
</dbReference>
<dbReference type="PROSITE" id="PS50003">
    <property type="entry name" value="PH_DOMAIN"/>
    <property type="match status" value="1"/>
</dbReference>
<dbReference type="PROSITE" id="PS50190">
    <property type="entry name" value="SEC7"/>
    <property type="match status" value="1"/>
</dbReference>
<keyword id="KW-0025">Alternative splicing</keyword>
<keyword id="KW-1003">Cell membrane</keyword>
<keyword id="KW-0966">Cell projection</keyword>
<keyword id="KW-0175">Coiled coil</keyword>
<keyword id="KW-0344">Guanine-nucleotide releasing factor</keyword>
<keyword id="KW-0446">Lipid-binding</keyword>
<keyword id="KW-0472">Membrane</keyword>
<keyword id="KW-0597">Phosphoprotein</keyword>
<keyword id="KW-1267">Proteomics identification</keyword>
<keyword id="KW-1185">Reference proteome</keyword>
<sequence>MMGDYRLPDHPQPMEILNLYLGDSLEPHPGECPRETCSHEDPPEPFEEQTWATDPPEPTRQNVPPWGSGVELTHLGSWVHQDGLEPCQEQTRATDPPESTRQDAPPWGSGVELTHLGSPSAQREHRQNTASPGSPVNSHLPGSPKQNRSTSTQVVFWAGILQAQMCVLDLEEELEKTEGLKAGLKCCLPTPPVDLPGDTGLHSSPPENEDSGEDSSEPEGEGQAWLREGTPDSSPQWGAEEESMFFSNPLFLASPCSENSASGECFSWGASDSHAGVRTGPESPATLEPPLPEDTVLWELESEPDLGDGAAISGHCTPPFPVPIYKPHSICWASVAAAEGAPAAPPGHGESEGDRLGPAPSAAPCVDEALTWESGCVGSDLGPAAHPVQPWASLSPEGWQRGGPFWPQVTLNSQDRDEREGGHPQESLPCTLAPCPWRSPASSPEPSSPESESRGPGPRPSPASSQEGSPQLQHHSSGILPKWTLDASQSSLLETDGEQPSSLKKKEAGEAPKPGEEVKSEGTARPAETGDVQPDIHLTSAEHENLRTPMNSSWLPGSPMPQAQSPEEGQRPPAGDKLANGVRNNKVAWNLASRLYRLEGFRKSEVAAYLQKNNDFSRAVAEEYLSFFQFGGQSLDRALRSFLQALVLSGETQERERILYQFSRRFHHCNPGIFPSVDSVHTLTCAIMLLNTDLHGQNIGKSMSCQEFITNLNGLRDGGNFPKELLKALYWSIRSEKLEWAVDEEDTARPEKAQPSLPAGKMSKPFLQLAQDPTVPTYKQGILARKMHQDADGKKTPWGKRGWKMFHTLLRGMVLYFLKQGEDHCLEGESLVGQMVDEPVGVHHSLATPATHYTKKPHVFQLRTADWRLYLFQAPTAKEMSSWIARINLAAATHSAPPFPAAVGSQRRFVRPILPVGPAQSSLEEQHRSHENCLDAAADDLLDLQRNLPERRGRGRELEEHRLRKEYLEYEKTRYETYVQLLVARLHCPSDALDLWEEQLGREAGGTREPKLSLKKSHSSPSLHQDEAPTTAKVKRNISERRTYRKIIPKRNRNQL</sequence>
<reference key="1">
    <citation type="journal article" date="2002" name="J. Cell Sci.">
        <title>A conserved carboxy-terminal domain of EFA6-family ARF6-guanine nucleotide exchange factors induces lengthening of microvilli-like membrane protrusions.</title>
        <authorList>
            <person name="Derrien V."/>
            <person name="Couillault C."/>
            <person name="Franco M."/>
            <person name="Martineau S."/>
            <person name="Montcourrier P."/>
            <person name="Houlgatte R."/>
            <person name="Chavrier P."/>
        </authorList>
    </citation>
    <scope>NUCLEOTIDE SEQUENCE [MRNA] (ISOFORM 1)</scope>
    <scope>FUNCTION</scope>
    <scope>SUBCELLULAR LOCATION</scope>
    <scope>TISSUE SPECIFICITY</scope>
    <source>
        <tissue>Placenta</tissue>
    </source>
</reference>
<reference key="2">
    <citation type="submission" date="1996-07" db="EMBL/GenBank/DDBJ databases">
        <title>A novel human gene (TIC) telomeric of interleukin-1 cluster on chromosome 2q13, homologous to the S.cerevisiae gene SEC 7.</title>
        <authorList>
            <person name="Klenka T.P."/>
            <person name="Herbst R."/>
            <person name="Nicklin M.J.H."/>
        </authorList>
    </citation>
    <scope>NUCLEOTIDE SEQUENCE [MRNA] (ISOFORM 1)</scope>
</reference>
<reference key="3">
    <citation type="submission" date="2006-03" db="EMBL/GenBank/DDBJ databases">
        <authorList>
            <consortium name="SeattleSNPs variation discovery resource"/>
        </authorList>
    </citation>
    <scope>NUCLEOTIDE SEQUENCE [GENOMIC DNA]</scope>
    <scope>VARIANT ALA-269</scope>
</reference>
<reference key="4">
    <citation type="journal article" date="2004" name="Nat. Genet.">
        <title>Complete sequencing and characterization of 21,243 full-length human cDNAs.</title>
        <authorList>
            <person name="Ota T."/>
            <person name="Suzuki Y."/>
            <person name="Nishikawa T."/>
            <person name="Otsuki T."/>
            <person name="Sugiyama T."/>
            <person name="Irie R."/>
            <person name="Wakamatsu A."/>
            <person name="Hayashi K."/>
            <person name="Sato H."/>
            <person name="Nagai K."/>
            <person name="Kimura K."/>
            <person name="Makita H."/>
            <person name="Sekine M."/>
            <person name="Obayashi M."/>
            <person name="Nishi T."/>
            <person name="Shibahara T."/>
            <person name="Tanaka T."/>
            <person name="Ishii S."/>
            <person name="Yamamoto J."/>
            <person name="Saito K."/>
            <person name="Kawai Y."/>
            <person name="Isono Y."/>
            <person name="Nakamura Y."/>
            <person name="Nagahari K."/>
            <person name="Murakami K."/>
            <person name="Yasuda T."/>
            <person name="Iwayanagi T."/>
            <person name="Wagatsuma M."/>
            <person name="Shiratori A."/>
            <person name="Sudo H."/>
            <person name="Hosoiri T."/>
            <person name="Kaku Y."/>
            <person name="Kodaira H."/>
            <person name="Kondo H."/>
            <person name="Sugawara M."/>
            <person name="Takahashi M."/>
            <person name="Kanda K."/>
            <person name="Yokoi T."/>
            <person name="Furuya T."/>
            <person name="Kikkawa E."/>
            <person name="Omura Y."/>
            <person name="Abe K."/>
            <person name="Kamihara K."/>
            <person name="Katsuta N."/>
            <person name="Sato K."/>
            <person name="Tanikawa M."/>
            <person name="Yamazaki M."/>
            <person name="Ninomiya K."/>
            <person name="Ishibashi T."/>
            <person name="Yamashita H."/>
            <person name="Murakawa K."/>
            <person name="Fujimori K."/>
            <person name="Tanai H."/>
            <person name="Kimata M."/>
            <person name="Watanabe M."/>
            <person name="Hiraoka S."/>
            <person name="Chiba Y."/>
            <person name="Ishida S."/>
            <person name="Ono Y."/>
            <person name="Takiguchi S."/>
            <person name="Watanabe S."/>
            <person name="Yosida M."/>
            <person name="Hotuta T."/>
            <person name="Kusano J."/>
            <person name="Kanehori K."/>
            <person name="Takahashi-Fujii A."/>
            <person name="Hara H."/>
            <person name="Tanase T.-O."/>
            <person name="Nomura Y."/>
            <person name="Togiya S."/>
            <person name="Komai F."/>
            <person name="Hara R."/>
            <person name="Takeuchi K."/>
            <person name="Arita M."/>
            <person name="Imose N."/>
            <person name="Musashino K."/>
            <person name="Yuuki H."/>
            <person name="Oshima A."/>
            <person name="Sasaki N."/>
            <person name="Aotsuka S."/>
            <person name="Yoshikawa Y."/>
            <person name="Matsunawa H."/>
            <person name="Ichihara T."/>
            <person name="Shiohata N."/>
            <person name="Sano S."/>
            <person name="Moriya S."/>
            <person name="Momiyama H."/>
            <person name="Satoh N."/>
            <person name="Takami S."/>
            <person name="Terashima Y."/>
            <person name="Suzuki O."/>
            <person name="Nakagawa S."/>
            <person name="Senoh A."/>
            <person name="Mizoguchi H."/>
            <person name="Goto Y."/>
            <person name="Shimizu F."/>
            <person name="Wakebe H."/>
            <person name="Hishigaki H."/>
            <person name="Watanabe T."/>
            <person name="Sugiyama A."/>
            <person name="Takemoto M."/>
            <person name="Kawakami B."/>
            <person name="Yamazaki M."/>
            <person name="Watanabe K."/>
            <person name="Kumagai A."/>
            <person name="Itakura S."/>
            <person name="Fukuzumi Y."/>
            <person name="Fujimori Y."/>
            <person name="Komiyama M."/>
            <person name="Tashiro H."/>
            <person name="Tanigami A."/>
            <person name="Fujiwara T."/>
            <person name="Ono T."/>
            <person name="Yamada K."/>
            <person name="Fujii Y."/>
            <person name="Ozaki K."/>
            <person name="Hirao M."/>
            <person name="Ohmori Y."/>
            <person name="Kawabata A."/>
            <person name="Hikiji T."/>
            <person name="Kobatake N."/>
            <person name="Inagaki H."/>
            <person name="Ikema Y."/>
            <person name="Okamoto S."/>
            <person name="Okitani R."/>
            <person name="Kawakami T."/>
            <person name="Noguchi S."/>
            <person name="Itoh T."/>
            <person name="Shigeta K."/>
            <person name="Senba T."/>
            <person name="Matsumura K."/>
            <person name="Nakajima Y."/>
            <person name="Mizuno T."/>
            <person name="Morinaga M."/>
            <person name="Sasaki M."/>
            <person name="Togashi T."/>
            <person name="Oyama M."/>
            <person name="Hata H."/>
            <person name="Watanabe M."/>
            <person name="Komatsu T."/>
            <person name="Mizushima-Sugano J."/>
            <person name="Satoh T."/>
            <person name="Shirai Y."/>
            <person name="Takahashi Y."/>
            <person name="Nakagawa K."/>
            <person name="Okumura K."/>
            <person name="Nagase T."/>
            <person name="Nomura N."/>
            <person name="Kikuchi H."/>
            <person name="Masuho Y."/>
            <person name="Yamashita R."/>
            <person name="Nakai K."/>
            <person name="Yada T."/>
            <person name="Nakamura Y."/>
            <person name="Ohara O."/>
            <person name="Isogai T."/>
            <person name="Sugano S."/>
        </authorList>
    </citation>
    <scope>NUCLEOTIDE SEQUENCE [LARGE SCALE MRNA] (ISOFORM 1)</scope>
    <scope>VARIANT ALA-269</scope>
    <source>
        <tissue>Hippocampus</tissue>
    </source>
</reference>
<reference key="5">
    <citation type="journal article" date="2005" name="Nature">
        <title>Generation and annotation of the DNA sequences of human chromosomes 2 and 4.</title>
        <authorList>
            <person name="Hillier L.W."/>
            <person name="Graves T.A."/>
            <person name="Fulton R.S."/>
            <person name="Fulton L.A."/>
            <person name="Pepin K.H."/>
            <person name="Minx P."/>
            <person name="Wagner-McPherson C."/>
            <person name="Layman D."/>
            <person name="Wylie K."/>
            <person name="Sekhon M."/>
            <person name="Becker M.C."/>
            <person name="Fewell G.A."/>
            <person name="Delehaunty K.D."/>
            <person name="Miner T.L."/>
            <person name="Nash W.E."/>
            <person name="Kremitzki C."/>
            <person name="Oddy L."/>
            <person name="Du H."/>
            <person name="Sun H."/>
            <person name="Bradshaw-Cordum H."/>
            <person name="Ali J."/>
            <person name="Carter J."/>
            <person name="Cordes M."/>
            <person name="Harris A."/>
            <person name="Isak A."/>
            <person name="van Brunt A."/>
            <person name="Nguyen C."/>
            <person name="Du F."/>
            <person name="Courtney L."/>
            <person name="Kalicki J."/>
            <person name="Ozersky P."/>
            <person name="Abbott S."/>
            <person name="Armstrong J."/>
            <person name="Belter E.A."/>
            <person name="Caruso L."/>
            <person name="Cedroni M."/>
            <person name="Cotton M."/>
            <person name="Davidson T."/>
            <person name="Desai A."/>
            <person name="Elliott G."/>
            <person name="Erb T."/>
            <person name="Fronick C."/>
            <person name="Gaige T."/>
            <person name="Haakenson W."/>
            <person name="Haglund K."/>
            <person name="Holmes A."/>
            <person name="Harkins R."/>
            <person name="Kim K."/>
            <person name="Kruchowski S.S."/>
            <person name="Strong C.M."/>
            <person name="Grewal N."/>
            <person name="Goyea E."/>
            <person name="Hou S."/>
            <person name="Levy A."/>
            <person name="Martinka S."/>
            <person name="Mead K."/>
            <person name="McLellan M.D."/>
            <person name="Meyer R."/>
            <person name="Randall-Maher J."/>
            <person name="Tomlinson C."/>
            <person name="Dauphin-Kohlberg S."/>
            <person name="Kozlowicz-Reilly A."/>
            <person name="Shah N."/>
            <person name="Swearengen-Shahid S."/>
            <person name="Snider J."/>
            <person name="Strong J.T."/>
            <person name="Thompson J."/>
            <person name="Yoakum M."/>
            <person name="Leonard S."/>
            <person name="Pearman C."/>
            <person name="Trani L."/>
            <person name="Radionenko M."/>
            <person name="Waligorski J.E."/>
            <person name="Wang C."/>
            <person name="Rock S.M."/>
            <person name="Tin-Wollam A.-M."/>
            <person name="Maupin R."/>
            <person name="Latreille P."/>
            <person name="Wendl M.C."/>
            <person name="Yang S.-P."/>
            <person name="Pohl C."/>
            <person name="Wallis J.W."/>
            <person name="Spieth J."/>
            <person name="Bieri T.A."/>
            <person name="Berkowicz N."/>
            <person name="Nelson J.O."/>
            <person name="Osborne J."/>
            <person name="Ding L."/>
            <person name="Meyer R."/>
            <person name="Sabo A."/>
            <person name="Shotland Y."/>
            <person name="Sinha P."/>
            <person name="Wohldmann P.E."/>
            <person name="Cook L.L."/>
            <person name="Hickenbotham M.T."/>
            <person name="Eldred J."/>
            <person name="Williams D."/>
            <person name="Jones T.A."/>
            <person name="She X."/>
            <person name="Ciccarelli F.D."/>
            <person name="Izaurralde E."/>
            <person name="Taylor J."/>
            <person name="Schmutz J."/>
            <person name="Myers R.M."/>
            <person name="Cox D.R."/>
            <person name="Huang X."/>
            <person name="McPherson J.D."/>
            <person name="Mardis E.R."/>
            <person name="Clifton S.W."/>
            <person name="Warren W.C."/>
            <person name="Chinwalla A.T."/>
            <person name="Eddy S.R."/>
            <person name="Marra M.A."/>
            <person name="Ovcharenko I."/>
            <person name="Furey T.S."/>
            <person name="Miller W."/>
            <person name="Eichler E.E."/>
            <person name="Bork P."/>
            <person name="Suyama M."/>
            <person name="Torrents D."/>
            <person name="Waterston R.H."/>
            <person name="Wilson R.K."/>
        </authorList>
    </citation>
    <scope>NUCLEOTIDE SEQUENCE [LARGE SCALE GENOMIC DNA]</scope>
</reference>
<reference key="6">
    <citation type="submission" date="2005-07" db="EMBL/GenBank/DDBJ databases">
        <authorList>
            <person name="Mural R.J."/>
            <person name="Istrail S."/>
            <person name="Sutton G.G."/>
            <person name="Florea L."/>
            <person name="Halpern A.L."/>
            <person name="Mobarry C.M."/>
            <person name="Lippert R."/>
            <person name="Walenz B."/>
            <person name="Shatkay H."/>
            <person name="Dew I."/>
            <person name="Miller J.R."/>
            <person name="Flanigan M.J."/>
            <person name="Edwards N.J."/>
            <person name="Bolanos R."/>
            <person name="Fasulo D."/>
            <person name="Halldorsson B.V."/>
            <person name="Hannenhalli S."/>
            <person name="Turner R."/>
            <person name="Yooseph S."/>
            <person name="Lu F."/>
            <person name="Nusskern D.R."/>
            <person name="Shue B.C."/>
            <person name="Zheng X.H."/>
            <person name="Zhong F."/>
            <person name="Delcher A.L."/>
            <person name="Huson D.H."/>
            <person name="Kravitz S.A."/>
            <person name="Mouchard L."/>
            <person name="Reinert K."/>
            <person name="Remington K.A."/>
            <person name="Clark A.G."/>
            <person name="Waterman M.S."/>
            <person name="Eichler E.E."/>
            <person name="Adams M.D."/>
            <person name="Hunkapiller M.W."/>
            <person name="Myers E.W."/>
            <person name="Venter J.C."/>
        </authorList>
    </citation>
    <scope>NUCLEOTIDE SEQUENCE [LARGE SCALE GENOMIC DNA]</scope>
    <scope>VARIANT ALA-269</scope>
</reference>
<reference key="7">
    <citation type="journal article" date="2004" name="Genome Res.">
        <title>The status, quality, and expansion of the NIH full-length cDNA project: the Mammalian Gene Collection (MGC).</title>
        <authorList>
            <consortium name="The MGC Project Team"/>
        </authorList>
    </citation>
    <scope>NUCLEOTIDE SEQUENCE [LARGE SCALE MRNA] (ISOFORMS 1 AND 2)</scope>
    <scope>VARIANT ALA-269</scope>
    <source>
        <tissue>Leukocyte</tissue>
        <tissue>Lymph</tissue>
    </source>
</reference>
<reference key="8">
    <citation type="journal article" date="2009" name="Sci. Signal.">
        <title>Quantitative phosphoproteomic analysis of T cell receptor signaling reveals system-wide modulation of protein-protein interactions.</title>
        <authorList>
            <person name="Mayya V."/>
            <person name="Lundgren D.H."/>
            <person name="Hwang S.-I."/>
            <person name="Rezaul K."/>
            <person name="Wu L."/>
            <person name="Eng J.K."/>
            <person name="Rodionov V."/>
            <person name="Han D.K."/>
        </authorList>
    </citation>
    <scope>PHOSPHORYLATION [LARGE SCALE ANALYSIS] AT SER-491</scope>
    <scope>IDENTIFICATION BY MASS SPECTROMETRY [LARGE SCALE ANALYSIS]</scope>
    <source>
        <tissue>Leukemic T-cell</tissue>
    </source>
</reference>
<reference key="9">
    <citation type="journal article" date="2011" name="Cell">
        <title>A Genome-wide multidimensional RNAi screen reveals pathways controlling MHC class II antigen presentation.</title>
        <authorList>
            <person name="Paul P."/>
            <person name="van den Hoorn T."/>
            <person name="Jongsma M.L."/>
            <person name="Bakker M.J."/>
            <person name="Hengeveld R."/>
            <person name="Janssen L."/>
            <person name="Cresswell P."/>
            <person name="Egan D.A."/>
            <person name="van Ham M."/>
            <person name="Ten Brinke A."/>
            <person name="Ovaa H."/>
            <person name="Beijersbergen R.L."/>
            <person name="Kuijl C."/>
            <person name="Neefjes J."/>
        </authorList>
    </citation>
    <scope>FUNCTION</scope>
    <scope>INTERACTION WITH VARIOUS PHOSPHATIDYLINOSITOL PHOSPHATE SPECIES</scope>
</reference>
<reference key="10">
    <citation type="journal article" date="2013" name="FEBS Lett.">
        <title>EFA6 activates Arf6 and participates in its targeting to the Flemming body during cytokinesis.</title>
        <authorList>
            <person name="Ueda T."/>
            <person name="Hanai A."/>
            <person name="Takei T."/>
            <person name="Kubo K."/>
            <person name="Ohgi M."/>
            <person name="Sakagami H."/>
            <person name="Takahashi S."/>
            <person name="Shin H.W."/>
            <person name="Nakayama K."/>
        </authorList>
    </citation>
    <scope>SUBCELLULAR LOCATION</scope>
</reference>
<reference key="11">
    <citation type="journal article" date="2013" name="J. Proteome Res.">
        <title>Toward a comprehensive characterization of a human cancer cell phosphoproteome.</title>
        <authorList>
            <person name="Zhou H."/>
            <person name="Di Palma S."/>
            <person name="Preisinger C."/>
            <person name="Peng M."/>
            <person name="Polat A.N."/>
            <person name="Heck A.J."/>
            <person name="Mohammed S."/>
        </authorList>
    </citation>
    <scope>PHOSPHORYLATION [LARGE SCALE ANALYSIS] AT SER-131; SER-134; SER-143; SER-413 AND SER-1019</scope>
    <scope>IDENTIFICATION BY MASS SPECTROMETRY [LARGE SCALE ANALYSIS]</scope>
    <source>
        <tissue>Erythroleukemia</tissue>
    </source>
</reference>
<reference key="12">
    <citation type="journal article" date="2014" name="J. Proteomics">
        <title>An enzyme assisted RP-RPLC approach for in-depth analysis of human liver phosphoproteome.</title>
        <authorList>
            <person name="Bian Y."/>
            <person name="Song C."/>
            <person name="Cheng K."/>
            <person name="Dong M."/>
            <person name="Wang F."/>
            <person name="Huang J."/>
            <person name="Sun D."/>
            <person name="Wang L."/>
            <person name="Ye M."/>
            <person name="Zou H."/>
        </authorList>
    </citation>
    <scope>PHOSPHORYLATION [LARGE SCALE ANALYSIS] AT SER-448</scope>
    <scope>IDENTIFICATION BY MASS SPECTROMETRY [LARGE SCALE ANALYSIS]</scope>
    <source>
        <tissue>Liver</tissue>
    </source>
</reference>
<gene>
    <name type="primary">PSD4</name>
    <name evidence="13 15" type="synonym">EFA6B</name>
    <name type="synonym">TIC</name>
</gene>